<dbReference type="EMBL" id="CP000542">
    <property type="protein sequence ID" value="ABM58061.1"/>
    <property type="molecule type" value="Genomic_DNA"/>
</dbReference>
<dbReference type="RefSeq" id="WP_011810064.1">
    <property type="nucleotide sequence ID" value="NC_008786.1"/>
</dbReference>
<dbReference type="SMR" id="A1WKA4"/>
<dbReference type="STRING" id="391735.Veis_2313"/>
<dbReference type="GeneID" id="76460878"/>
<dbReference type="KEGG" id="vei:Veis_2313"/>
<dbReference type="eggNOG" id="COG0094">
    <property type="taxonomic scope" value="Bacteria"/>
</dbReference>
<dbReference type="HOGENOM" id="CLU_061015_2_1_4"/>
<dbReference type="OrthoDB" id="9806626at2"/>
<dbReference type="Proteomes" id="UP000000374">
    <property type="component" value="Chromosome"/>
</dbReference>
<dbReference type="GO" id="GO:1990904">
    <property type="term" value="C:ribonucleoprotein complex"/>
    <property type="evidence" value="ECO:0007669"/>
    <property type="project" value="UniProtKB-KW"/>
</dbReference>
<dbReference type="GO" id="GO:0005840">
    <property type="term" value="C:ribosome"/>
    <property type="evidence" value="ECO:0007669"/>
    <property type="project" value="UniProtKB-KW"/>
</dbReference>
<dbReference type="GO" id="GO:0019843">
    <property type="term" value="F:rRNA binding"/>
    <property type="evidence" value="ECO:0007669"/>
    <property type="project" value="UniProtKB-UniRule"/>
</dbReference>
<dbReference type="GO" id="GO:0003735">
    <property type="term" value="F:structural constituent of ribosome"/>
    <property type="evidence" value="ECO:0007669"/>
    <property type="project" value="InterPro"/>
</dbReference>
<dbReference type="GO" id="GO:0000049">
    <property type="term" value="F:tRNA binding"/>
    <property type="evidence" value="ECO:0007669"/>
    <property type="project" value="UniProtKB-UniRule"/>
</dbReference>
<dbReference type="GO" id="GO:0006412">
    <property type="term" value="P:translation"/>
    <property type="evidence" value="ECO:0007669"/>
    <property type="project" value="UniProtKB-UniRule"/>
</dbReference>
<dbReference type="FunFam" id="3.30.1440.10:FF:000001">
    <property type="entry name" value="50S ribosomal protein L5"/>
    <property type="match status" value="1"/>
</dbReference>
<dbReference type="Gene3D" id="3.30.1440.10">
    <property type="match status" value="1"/>
</dbReference>
<dbReference type="HAMAP" id="MF_01333_B">
    <property type="entry name" value="Ribosomal_uL5_B"/>
    <property type="match status" value="1"/>
</dbReference>
<dbReference type="InterPro" id="IPR002132">
    <property type="entry name" value="Ribosomal_uL5"/>
</dbReference>
<dbReference type="InterPro" id="IPR020930">
    <property type="entry name" value="Ribosomal_uL5_bac-type"/>
</dbReference>
<dbReference type="InterPro" id="IPR031309">
    <property type="entry name" value="Ribosomal_uL5_C"/>
</dbReference>
<dbReference type="InterPro" id="IPR020929">
    <property type="entry name" value="Ribosomal_uL5_CS"/>
</dbReference>
<dbReference type="InterPro" id="IPR022803">
    <property type="entry name" value="Ribosomal_uL5_dom_sf"/>
</dbReference>
<dbReference type="InterPro" id="IPR031310">
    <property type="entry name" value="Ribosomal_uL5_N"/>
</dbReference>
<dbReference type="NCBIfam" id="NF000585">
    <property type="entry name" value="PRK00010.1"/>
    <property type="match status" value="1"/>
</dbReference>
<dbReference type="PANTHER" id="PTHR11994">
    <property type="entry name" value="60S RIBOSOMAL PROTEIN L11-RELATED"/>
    <property type="match status" value="1"/>
</dbReference>
<dbReference type="Pfam" id="PF00281">
    <property type="entry name" value="Ribosomal_L5"/>
    <property type="match status" value="1"/>
</dbReference>
<dbReference type="Pfam" id="PF00673">
    <property type="entry name" value="Ribosomal_L5_C"/>
    <property type="match status" value="1"/>
</dbReference>
<dbReference type="PIRSF" id="PIRSF002161">
    <property type="entry name" value="Ribosomal_L5"/>
    <property type="match status" value="1"/>
</dbReference>
<dbReference type="SUPFAM" id="SSF55282">
    <property type="entry name" value="RL5-like"/>
    <property type="match status" value="1"/>
</dbReference>
<dbReference type="PROSITE" id="PS00358">
    <property type="entry name" value="RIBOSOMAL_L5"/>
    <property type="match status" value="1"/>
</dbReference>
<protein>
    <recommendedName>
        <fullName evidence="1">Large ribosomal subunit protein uL5</fullName>
    </recommendedName>
    <alternativeName>
        <fullName evidence="2">50S ribosomal protein L5</fullName>
    </alternativeName>
</protein>
<name>RL5_VEREI</name>
<reference key="1">
    <citation type="submission" date="2006-12" db="EMBL/GenBank/DDBJ databases">
        <title>Complete sequence of chromosome 1 of Verminephrobacter eiseniae EF01-2.</title>
        <authorList>
            <person name="Copeland A."/>
            <person name="Lucas S."/>
            <person name="Lapidus A."/>
            <person name="Barry K."/>
            <person name="Detter J.C."/>
            <person name="Glavina del Rio T."/>
            <person name="Dalin E."/>
            <person name="Tice H."/>
            <person name="Pitluck S."/>
            <person name="Chertkov O."/>
            <person name="Brettin T."/>
            <person name="Bruce D."/>
            <person name="Han C."/>
            <person name="Tapia R."/>
            <person name="Gilna P."/>
            <person name="Schmutz J."/>
            <person name="Larimer F."/>
            <person name="Land M."/>
            <person name="Hauser L."/>
            <person name="Kyrpides N."/>
            <person name="Kim E."/>
            <person name="Stahl D."/>
            <person name="Richardson P."/>
        </authorList>
    </citation>
    <scope>NUCLEOTIDE SEQUENCE [LARGE SCALE GENOMIC DNA]</scope>
    <source>
        <strain>EF01-2</strain>
    </source>
</reference>
<keyword id="KW-1185">Reference proteome</keyword>
<keyword id="KW-0687">Ribonucleoprotein</keyword>
<keyword id="KW-0689">Ribosomal protein</keyword>
<keyword id="KW-0694">RNA-binding</keyword>
<keyword id="KW-0699">rRNA-binding</keyword>
<keyword id="KW-0820">tRNA-binding</keyword>
<sequence length="179" mass="19965">MARLQAIYRDKLVPELIRQFGYSSPMQVPRLSKITLNMGVSEAVSDKKVMDSAVADLTRIAGQKPVVTKAKKAIAGFKIREGQAIGCMVTLRGVQMYEFLDRFVTVALPRVRDFRGISGRSFDGRGNYNVGVKEQIIFPEIEYDKVDALRGLNVSITTTARTDEEAKALLAGFRFPFKN</sequence>
<organism>
    <name type="scientific">Verminephrobacter eiseniae (strain EF01-2)</name>
    <dbReference type="NCBI Taxonomy" id="391735"/>
    <lineage>
        <taxon>Bacteria</taxon>
        <taxon>Pseudomonadati</taxon>
        <taxon>Pseudomonadota</taxon>
        <taxon>Betaproteobacteria</taxon>
        <taxon>Burkholderiales</taxon>
        <taxon>Comamonadaceae</taxon>
        <taxon>Verminephrobacter</taxon>
    </lineage>
</organism>
<feature type="chain" id="PRO_1000052853" description="Large ribosomal subunit protein uL5">
    <location>
        <begin position="1"/>
        <end position="179"/>
    </location>
</feature>
<evidence type="ECO:0000255" key="1">
    <source>
        <dbReference type="HAMAP-Rule" id="MF_01333"/>
    </source>
</evidence>
<evidence type="ECO:0000305" key="2"/>
<gene>
    <name evidence="1" type="primary">rplE</name>
    <name type="ordered locus">Veis_2313</name>
</gene>
<proteinExistence type="inferred from homology"/>
<accession>A1WKA4</accession>
<comment type="function">
    <text evidence="1">This is one of the proteins that bind and probably mediate the attachment of the 5S RNA into the large ribosomal subunit, where it forms part of the central protuberance. In the 70S ribosome it contacts protein S13 of the 30S subunit (bridge B1b), connecting the 2 subunits; this bridge is implicated in subunit movement. Contacts the P site tRNA; the 5S rRNA and some of its associated proteins might help stabilize positioning of ribosome-bound tRNAs.</text>
</comment>
<comment type="subunit">
    <text evidence="1">Part of the 50S ribosomal subunit; part of the 5S rRNA/L5/L18/L25 subcomplex. Contacts the 5S rRNA and the P site tRNA. Forms a bridge to the 30S subunit in the 70S ribosome.</text>
</comment>
<comment type="similarity">
    <text evidence="1">Belongs to the universal ribosomal protein uL5 family.</text>
</comment>